<evidence type="ECO:0000255" key="1">
    <source>
        <dbReference type="HAMAP-Rule" id="MF_00377"/>
    </source>
</evidence>
<organism>
    <name type="scientific">Crocosphaera subtropica (strain ATCC 51142 / BH68)</name>
    <name type="common">Cyanothece sp. (strain ATCC 51142)</name>
    <dbReference type="NCBI Taxonomy" id="43989"/>
    <lineage>
        <taxon>Bacteria</taxon>
        <taxon>Bacillati</taxon>
        <taxon>Cyanobacteriota</taxon>
        <taxon>Cyanophyceae</taxon>
        <taxon>Oscillatoriophycideae</taxon>
        <taxon>Chroococcales</taxon>
        <taxon>Aphanothecaceae</taxon>
        <taxon>Crocosphaera</taxon>
        <taxon>Crocosphaera subtropica</taxon>
    </lineage>
</organism>
<dbReference type="EMBL" id="CP000806">
    <property type="protein sequence ID" value="ACB53015.1"/>
    <property type="molecule type" value="Genomic_DNA"/>
</dbReference>
<dbReference type="RefSeq" id="WP_009545174.1">
    <property type="nucleotide sequence ID" value="NC_010546.1"/>
</dbReference>
<dbReference type="SMR" id="B1X0X6"/>
<dbReference type="STRING" id="43989.cce_3667"/>
<dbReference type="KEGG" id="cyt:cce_3667"/>
<dbReference type="eggNOG" id="COG0593">
    <property type="taxonomic scope" value="Bacteria"/>
</dbReference>
<dbReference type="HOGENOM" id="CLU_026910_3_1_3"/>
<dbReference type="OrthoDB" id="9807019at2"/>
<dbReference type="Proteomes" id="UP000001203">
    <property type="component" value="Chromosome circular"/>
</dbReference>
<dbReference type="GO" id="GO:0005737">
    <property type="term" value="C:cytoplasm"/>
    <property type="evidence" value="ECO:0007669"/>
    <property type="project" value="UniProtKB-SubCell"/>
</dbReference>
<dbReference type="GO" id="GO:0005886">
    <property type="term" value="C:plasma membrane"/>
    <property type="evidence" value="ECO:0007669"/>
    <property type="project" value="TreeGrafter"/>
</dbReference>
<dbReference type="GO" id="GO:0005524">
    <property type="term" value="F:ATP binding"/>
    <property type="evidence" value="ECO:0007669"/>
    <property type="project" value="UniProtKB-UniRule"/>
</dbReference>
<dbReference type="GO" id="GO:0016887">
    <property type="term" value="F:ATP hydrolysis activity"/>
    <property type="evidence" value="ECO:0007669"/>
    <property type="project" value="InterPro"/>
</dbReference>
<dbReference type="GO" id="GO:0003688">
    <property type="term" value="F:DNA replication origin binding"/>
    <property type="evidence" value="ECO:0007669"/>
    <property type="project" value="UniProtKB-UniRule"/>
</dbReference>
<dbReference type="GO" id="GO:0008289">
    <property type="term" value="F:lipid binding"/>
    <property type="evidence" value="ECO:0007669"/>
    <property type="project" value="UniProtKB-KW"/>
</dbReference>
<dbReference type="GO" id="GO:0006270">
    <property type="term" value="P:DNA replication initiation"/>
    <property type="evidence" value="ECO:0007669"/>
    <property type="project" value="UniProtKB-UniRule"/>
</dbReference>
<dbReference type="GO" id="GO:0006275">
    <property type="term" value="P:regulation of DNA replication"/>
    <property type="evidence" value="ECO:0007669"/>
    <property type="project" value="UniProtKB-UniRule"/>
</dbReference>
<dbReference type="CDD" id="cd00009">
    <property type="entry name" value="AAA"/>
    <property type="match status" value="1"/>
</dbReference>
<dbReference type="CDD" id="cd06571">
    <property type="entry name" value="Bac_DnaA_C"/>
    <property type="match status" value="1"/>
</dbReference>
<dbReference type="FunFam" id="3.40.50.300:FF:000150">
    <property type="entry name" value="Chromosomal replication initiator protein DnaA"/>
    <property type="match status" value="1"/>
</dbReference>
<dbReference type="Gene3D" id="1.10.1750.10">
    <property type="match status" value="1"/>
</dbReference>
<dbReference type="Gene3D" id="1.10.8.60">
    <property type="match status" value="1"/>
</dbReference>
<dbReference type="Gene3D" id="3.30.300.180">
    <property type="match status" value="1"/>
</dbReference>
<dbReference type="Gene3D" id="3.40.50.300">
    <property type="entry name" value="P-loop containing nucleotide triphosphate hydrolases"/>
    <property type="match status" value="1"/>
</dbReference>
<dbReference type="HAMAP" id="MF_00377">
    <property type="entry name" value="DnaA_bact"/>
    <property type="match status" value="1"/>
</dbReference>
<dbReference type="InterPro" id="IPR003593">
    <property type="entry name" value="AAA+_ATPase"/>
</dbReference>
<dbReference type="InterPro" id="IPR001957">
    <property type="entry name" value="Chromosome_initiator_DnaA"/>
</dbReference>
<dbReference type="InterPro" id="IPR020591">
    <property type="entry name" value="Chromosome_initiator_DnaA-like"/>
</dbReference>
<dbReference type="InterPro" id="IPR018312">
    <property type="entry name" value="Chromosome_initiator_DnaA_CS"/>
</dbReference>
<dbReference type="InterPro" id="IPR013159">
    <property type="entry name" value="DnaA_C"/>
</dbReference>
<dbReference type="InterPro" id="IPR013317">
    <property type="entry name" value="DnaA_dom"/>
</dbReference>
<dbReference type="InterPro" id="IPR024633">
    <property type="entry name" value="DnaA_N_dom"/>
</dbReference>
<dbReference type="InterPro" id="IPR038454">
    <property type="entry name" value="DnaA_N_sf"/>
</dbReference>
<dbReference type="InterPro" id="IPR027417">
    <property type="entry name" value="P-loop_NTPase"/>
</dbReference>
<dbReference type="InterPro" id="IPR010921">
    <property type="entry name" value="Trp_repressor/repl_initiator"/>
</dbReference>
<dbReference type="NCBIfam" id="TIGR00362">
    <property type="entry name" value="DnaA"/>
    <property type="match status" value="1"/>
</dbReference>
<dbReference type="PANTHER" id="PTHR30050">
    <property type="entry name" value="CHROMOSOMAL REPLICATION INITIATOR PROTEIN DNAA"/>
    <property type="match status" value="1"/>
</dbReference>
<dbReference type="PANTHER" id="PTHR30050:SF2">
    <property type="entry name" value="CHROMOSOMAL REPLICATION INITIATOR PROTEIN DNAA"/>
    <property type="match status" value="1"/>
</dbReference>
<dbReference type="Pfam" id="PF00308">
    <property type="entry name" value="Bac_DnaA"/>
    <property type="match status" value="1"/>
</dbReference>
<dbReference type="Pfam" id="PF08299">
    <property type="entry name" value="Bac_DnaA_C"/>
    <property type="match status" value="1"/>
</dbReference>
<dbReference type="Pfam" id="PF11638">
    <property type="entry name" value="DnaA_N"/>
    <property type="match status" value="1"/>
</dbReference>
<dbReference type="PRINTS" id="PR00051">
    <property type="entry name" value="DNAA"/>
</dbReference>
<dbReference type="SMART" id="SM00382">
    <property type="entry name" value="AAA"/>
    <property type="match status" value="1"/>
</dbReference>
<dbReference type="SMART" id="SM00760">
    <property type="entry name" value="Bac_DnaA_C"/>
    <property type="match status" value="1"/>
</dbReference>
<dbReference type="SUPFAM" id="SSF52540">
    <property type="entry name" value="P-loop containing nucleoside triphosphate hydrolases"/>
    <property type="match status" value="1"/>
</dbReference>
<dbReference type="SUPFAM" id="SSF48295">
    <property type="entry name" value="TrpR-like"/>
    <property type="match status" value="1"/>
</dbReference>
<dbReference type="PROSITE" id="PS01008">
    <property type="entry name" value="DNAA"/>
    <property type="match status" value="1"/>
</dbReference>
<accession>B1X0X6</accession>
<gene>
    <name evidence="1" type="primary">dnaA</name>
    <name type="ordered locus">cce_3667</name>
</gene>
<proteinExistence type="inferred from homology"/>
<keyword id="KW-0067">ATP-binding</keyword>
<keyword id="KW-0963">Cytoplasm</keyword>
<keyword id="KW-0235">DNA replication</keyword>
<keyword id="KW-0238">DNA-binding</keyword>
<keyword id="KW-0446">Lipid-binding</keyword>
<keyword id="KW-0547">Nucleotide-binding</keyword>
<keyword id="KW-1185">Reference proteome</keyword>
<protein>
    <recommendedName>
        <fullName evidence="1">Chromosomal replication initiator protein DnaA</fullName>
    </recommendedName>
</protein>
<name>DNAA_CROS5</name>
<comment type="function">
    <text evidence="1">Plays an essential role in the initiation and regulation of chromosomal replication. ATP-DnaA binds to the origin of replication (oriC) to initiate formation of the DNA replication initiation complex once per cell cycle. Binds the DnaA box (a 9 base pair repeat at the origin) and separates the double-stranded (ds)DNA. Forms a right-handed helical filament on oriC DNA; dsDNA binds to the exterior of the filament while single-stranded (ss)DNA is stabiized in the filament's interior. The ATP-DnaA-oriC complex binds and stabilizes one strand of the AT-rich DNA unwinding element (DUE), permitting loading of DNA polymerase. After initiation quickly degrades to an ADP-DnaA complex that is not apt for DNA replication. Binds acidic phospholipids.</text>
</comment>
<comment type="subunit">
    <text evidence="1">Oligomerizes as a right-handed, spiral filament on DNA at oriC.</text>
</comment>
<comment type="subcellular location">
    <subcellularLocation>
        <location evidence="1">Cytoplasm</location>
    </subcellularLocation>
</comment>
<comment type="domain">
    <text evidence="1">Domain I is involved in oligomerization and binding regulators, domain II is flexibile and of varying length in different bacteria, domain III forms the AAA+ region, while domain IV binds dsDNA.</text>
</comment>
<comment type="similarity">
    <text evidence="1">Belongs to the DnaA family.</text>
</comment>
<reference key="1">
    <citation type="journal article" date="2008" name="Proc. Natl. Acad. Sci. U.S.A.">
        <title>The genome of Cyanothece 51142, a unicellular diazotrophic cyanobacterium important in the marine nitrogen cycle.</title>
        <authorList>
            <person name="Welsh E.A."/>
            <person name="Liberton M."/>
            <person name="Stoeckel J."/>
            <person name="Loh T."/>
            <person name="Elvitigala T."/>
            <person name="Wang C."/>
            <person name="Wollam A."/>
            <person name="Fulton R.S."/>
            <person name="Clifton S.W."/>
            <person name="Jacobs J.M."/>
            <person name="Aurora R."/>
            <person name="Ghosh B.K."/>
            <person name="Sherman L.A."/>
            <person name="Smith R.D."/>
            <person name="Wilson R.K."/>
            <person name="Pakrasi H.B."/>
        </authorList>
    </citation>
    <scope>NUCLEOTIDE SEQUENCE [LARGE SCALE GENOMIC DNA]</scope>
    <source>
        <strain>ATCC 51142 / BH68</strain>
    </source>
</reference>
<sequence length="455" mass="52142">MTISPQYIWNQVLDRLKLRLNPTAYETWIASATVQTFQDNCLVIQVENPFILNHLQKTYYSLILEEVETIVGYPIAVKLTTSQEQNLRIVDKNKDNLSSTKLQNKRQQESPKLNQLNPRYNFSRFVVGPTNRMAHAASLAVAESPGREFNPLFLCGGVGLGKTHLMQAIAYYRLELYPNANVFYVSTEQFTNDLITSIRQDSMENFREHYRTADILLVDDIQFIEGKEYTQEEFFHTFNTLHEAGKQVVIASDRPPKRIPSLQDRLVSRFSMGLIADIQVPDLETRMAILQKKAEYENIRLPRDVIEYIATNYTSNIRELEGALIRAVTYISISGLSMTVENIAPVLNPPMEQITASPEIIIQIVAENFNVSVEDLKGSSRRREISLARQIGMYLMRQHTDLSLPRIGEEFGGKDHTTVLYSCDKISKLQKKDWDLSQQLSELSDRINIASRNQN</sequence>
<feature type="chain" id="PRO_1000189793" description="Chromosomal replication initiator protein DnaA">
    <location>
        <begin position="1"/>
        <end position="455"/>
    </location>
</feature>
<feature type="region of interest" description="Domain I, interacts with DnaA modulators" evidence="1">
    <location>
        <begin position="1"/>
        <end position="73"/>
    </location>
</feature>
<feature type="region of interest" description="Domain II" evidence="1">
    <location>
        <begin position="73"/>
        <end position="114"/>
    </location>
</feature>
<feature type="region of interest" description="Domain III, AAA+ region" evidence="1">
    <location>
        <begin position="115"/>
        <end position="331"/>
    </location>
</feature>
<feature type="region of interest" description="Domain IV, binds dsDNA" evidence="1">
    <location>
        <begin position="332"/>
        <end position="455"/>
    </location>
</feature>
<feature type="binding site" evidence="1">
    <location>
        <position position="159"/>
    </location>
    <ligand>
        <name>ATP</name>
        <dbReference type="ChEBI" id="CHEBI:30616"/>
    </ligand>
</feature>
<feature type="binding site" evidence="1">
    <location>
        <position position="161"/>
    </location>
    <ligand>
        <name>ATP</name>
        <dbReference type="ChEBI" id="CHEBI:30616"/>
    </ligand>
</feature>
<feature type="binding site" evidence="1">
    <location>
        <position position="162"/>
    </location>
    <ligand>
        <name>ATP</name>
        <dbReference type="ChEBI" id="CHEBI:30616"/>
    </ligand>
</feature>
<feature type="binding site" evidence="1">
    <location>
        <position position="163"/>
    </location>
    <ligand>
        <name>ATP</name>
        <dbReference type="ChEBI" id="CHEBI:30616"/>
    </ligand>
</feature>